<name>MRAZ_LEVBA</name>
<evidence type="ECO:0000255" key="1">
    <source>
        <dbReference type="HAMAP-Rule" id="MF_01008"/>
    </source>
</evidence>
<evidence type="ECO:0000255" key="2">
    <source>
        <dbReference type="PROSITE-ProRule" id="PRU01076"/>
    </source>
</evidence>
<dbReference type="EMBL" id="CP000416">
    <property type="protein sequence ID" value="ABJ64553.1"/>
    <property type="molecule type" value="Genomic_DNA"/>
</dbReference>
<dbReference type="RefSeq" id="WP_011668181.1">
    <property type="nucleotide sequence ID" value="NC_008497.1"/>
</dbReference>
<dbReference type="SMR" id="Q03QG9"/>
<dbReference type="STRING" id="387344.LVIS_1455"/>
<dbReference type="GeneID" id="56993227"/>
<dbReference type="KEGG" id="lbr:LVIS_1455"/>
<dbReference type="eggNOG" id="COG2001">
    <property type="taxonomic scope" value="Bacteria"/>
</dbReference>
<dbReference type="HOGENOM" id="CLU_107907_0_5_9"/>
<dbReference type="Proteomes" id="UP000001652">
    <property type="component" value="Chromosome"/>
</dbReference>
<dbReference type="GO" id="GO:0005737">
    <property type="term" value="C:cytoplasm"/>
    <property type="evidence" value="ECO:0007669"/>
    <property type="project" value="UniProtKB-UniRule"/>
</dbReference>
<dbReference type="GO" id="GO:0009295">
    <property type="term" value="C:nucleoid"/>
    <property type="evidence" value="ECO:0007669"/>
    <property type="project" value="UniProtKB-SubCell"/>
</dbReference>
<dbReference type="GO" id="GO:0003700">
    <property type="term" value="F:DNA-binding transcription factor activity"/>
    <property type="evidence" value="ECO:0007669"/>
    <property type="project" value="UniProtKB-UniRule"/>
</dbReference>
<dbReference type="GO" id="GO:0000976">
    <property type="term" value="F:transcription cis-regulatory region binding"/>
    <property type="evidence" value="ECO:0007669"/>
    <property type="project" value="TreeGrafter"/>
</dbReference>
<dbReference type="GO" id="GO:2000143">
    <property type="term" value="P:negative regulation of DNA-templated transcription initiation"/>
    <property type="evidence" value="ECO:0007669"/>
    <property type="project" value="TreeGrafter"/>
</dbReference>
<dbReference type="CDD" id="cd16321">
    <property type="entry name" value="MraZ_C"/>
    <property type="match status" value="1"/>
</dbReference>
<dbReference type="CDD" id="cd16320">
    <property type="entry name" value="MraZ_N"/>
    <property type="match status" value="1"/>
</dbReference>
<dbReference type="FunFam" id="3.40.1550.20:FF:000002">
    <property type="entry name" value="Transcriptional regulator MraZ"/>
    <property type="match status" value="1"/>
</dbReference>
<dbReference type="Gene3D" id="3.40.1550.20">
    <property type="entry name" value="Transcriptional regulator MraZ domain"/>
    <property type="match status" value="1"/>
</dbReference>
<dbReference type="HAMAP" id="MF_01008">
    <property type="entry name" value="MraZ"/>
    <property type="match status" value="1"/>
</dbReference>
<dbReference type="InterPro" id="IPR003444">
    <property type="entry name" value="MraZ"/>
</dbReference>
<dbReference type="InterPro" id="IPR035644">
    <property type="entry name" value="MraZ_C"/>
</dbReference>
<dbReference type="InterPro" id="IPR020603">
    <property type="entry name" value="MraZ_dom"/>
</dbReference>
<dbReference type="InterPro" id="IPR035642">
    <property type="entry name" value="MraZ_N"/>
</dbReference>
<dbReference type="InterPro" id="IPR038619">
    <property type="entry name" value="MraZ_sf"/>
</dbReference>
<dbReference type="InterPro" id="IPR007159">
    <property type="entry name" value="SpoVT-AbrB_dom"/>
</dbReference>
<dbReference type="InterPro" id="IPR037914">
    <property type="entry name" value="SpoVT-AbrB_sf"/>
</dbReference>
<dbReference type="NCBIfam" id="TIGR00242">
    <property type="entry name" value="division/cell wall cluster transcriptional repressor MraZ"/>
    <property type="match status" value="1"/>
</dbReference>
<dbReference type="PANTHER" id="PTHR34701">
    <property type="entry name" value="TRANSCRIPTIONAL REGULATOR MRAZ"/>
    <property type="match status" value="1"/>
</dbReference>
<dbReference type="PANTHER" id="PTHR34701:SF1">
    <property type="entry name" value="TRANSCRIPTIONAL REGULATOR MRAZ"/>
    <property type="match status" value="1"/>
</dbReference>
<dbReference type="Pfam" id="PF02381">
    <property type="entry name" value="MraZ"/>
    <property type="match status" value="2"/>
</dbReference>
<dbReference type="SUPFAM" id="SSF89447">
    <property type="entry name" value="AbrB/MazE/MraZ-like"/>
    <property type="match status" value="1"/>
</dbReference>
<dbReference type="PROSITE" id="PS51740">
    <property type="entry name" value="SPOVT_ABRB"/>
    <property type="match status" value="2"/>
</dbReference>
<sequence>MFMGEFEHSVDTKGRLIIPAKFREQLGEQFVVTRGMDGCLFGYPMTEWTALQEKLKALPVNRKDARAFVRFFYSAATECELDKQGRINLPKSLRDHAALTKQCVIVGVANRFEIWSAERWNDFSTKAEEDFDDIAENLIDFGM</sequence>
<accession>Q03QG9</accession>
<protein>
    <recommendedName>
        <fullName>Transcriptional regulator MraZ</fullName>
    </recommendedName>
</protein>
<comment type="subunit">
    <text evidence="1">Forms oligomers.</text>
</comment>
<comment type="subcellular location">
    <subcellularLocation>
        <location evidence="1">Cytoplasm</location>
        <location evidence="1">Nucleoid</location>
    </subcellularLocation>
</comment>
<comment type="similarity">
    <text evidence="1">Belongs to the MraZ family.</text>
</comment>
<keyword id="KW-0963">Cytoplasm</keyword>
<keyword id="KW-0238">DNA-binding</keyword>
<keyword id="KW-1185">Reference proteome</keyword>
<keyword id="KW-0677">Repeat</keyword>
<keyword id="KW-0804">Transcription</keyword>
<keyword id="KW-0805">Transcription regulation</keyword>
<gene>
    <name evidence="1" type="primary">mraZ</name>
    <name type="ordered locus">LVIS_1455</name>
</gene>
<proteinExistence type="inferred from homology"/>
<organism>
    <name type="scientific">Levilactobacillus brevis (strain ATCC 367 / BCRC 12310 / CIP 105137 / JCM 1170 / LMG 11437 / NCIMB 947 / NCTC 947)</name>
    <name type="common">Lactobacillus brevis</name>
    <dbReference type="NCBI Taxonomy" id="387344"/>
    <lineage>
        <taxon>Bacteria</taxon>
        <taxon>Bacillati</taxon>
        <taxon>Bacillota</taxon>
        <taxon>Bacilli</taxon>
        <taxon>Lactobacillales</taxon>
        <taxon>Lactobacillaceae</taxon>
        <taxon>Levilactobacillus</taxon>
    </lineage>
</organism>
<reference key="1">
    <citation type="journal article" date="2006" name="Proc. Natl. Acad. Sci. U.S.A.">
        <title>Comparative genomics of the lactic acid bacteria.</title>
        <authorList>
            <person name="Makarova K.S."/>
            <person name="Slesarev A."/>
            <person name="Wolf Y.I."/>
            <person name="Sorokin A."/>
            <person name="Mirkin B."/>
            <person name="Koonin E.V."/>
            <person name="Pavlov A."/>
            <person name="Pavlova N."/>
            <person name="Karamychev V."/>
            <person name="Polouchine N."/>
            <person name="Shakhova V."/>
            <person name="Grigoriev I."/>
            <person name="Lou Y."/>
            <person name="Rohksar D."/>
            <person name="Lucas S."/>
            <person name="Huang K."/>
            <person name="Goodstein D.M."/>
            <person name="Hawkins T."/>
            <person name="Plengvidhya V."/>
            <person name="Welker D."/>
            <person name="Hughes J."/>
            <person name="Goh Y."/>
            <person name="Benson A."/>
            <person name="Baldwin K."/>
            <person name="Lee J.-H."/>
            <person name="Diaz-Muniz I."/>
            <person name="Dosti B."/>
            <person name="Smeianov V."/>
            <person name="Wechter W."/>
            <person name="Barabote R."/>
            <person name="Lorca G."/>
            <person name="Altermann E."/>
            <person name="Barrangou R."/>
            <person name="Ganesan B."/>
            <person name="Xie Y."/>
            <person name="Rawsthorne H."/>
            <person name="Tamir D."/>
            <person name="Parker C."/>
            <person name="Breidt F."/>
            <person name="Broadbent J.R."/>
            <person name="Hutkins R."/>
            <person name="O'Sullivan D."/>
            <person name="Steele J."/>
            <person name="Unlu G."/>
            <person name="Saier M.H. Jr."/>
            <person name="Klaenhammer T."/>
            <person name="Richardson P."/>
            <person name="Kozyavkin S."/>
            <person name="Weimer B.C."/>
            <person name="Mills D.A."/>
        </authorList>
    </citation>
    <scope>NUCLEOTIDE SEQUENCE [LARGE SCALE GENOMIC DNA]</scope>
    <source>
        <strain>ATCC 367 / BCRC 12310 / CIP 105137 / JCM 1170 / LMG 11437 / NCIMB 947 / NCTC 947</strain>
    </source>
</reference>
<feature type="chain" id="PRO_1000062886" description="Transcriptional regulator MraZ">
    <location>
        <begin position="1"/>
        <end position="143"/>
    </location>
</feature>
<feature type="domain" description="SpoVT-AbrB 1" evidence="2">
    <location>
        <begin position="5"/>
        <end position="47"/>
    </location>
</feature>
<feature type="domain" description="SpoVT-AbrB 2" evidence="2">
    <location>
        <begin position="76"/>
        <end position="119"/>
    </location>
</feature>